<name>CU109_IXORI</name>
<dbReference type="GO" id="GO:0062129">
    <property type="term" value="C:chitin-based extracellular matrix"/>
    <property type="evidence" value="ECO:0007669"/>
    <property type="project" value="TreeGrafter"/>
</dbReference>
<dbReference type="GO" id="GO:0008061">
    <property type="term" value="F:chitin binding"/>
    <property type="evidence" value="ECO:0007669"/>
    <property type="project" value="UniProtKB-KW"/>
</dbReference>
<dbReference type="GO" id="GO:0008010">
    <property type="term" value="F:structural constituent of chitin-based larval cuticle"/>
    <property type="evidence" value="ECO:0007669"/>
    <property type="project" value="TreeGrafter"/>
</dbReference>
<dbReference type="Gene3D" id="3.10.50.10">
    <property type="match status" value="1"/>
</dbReference>
<dbReference type="InterPro" id="IPR031311">
    <property type="entry name" value="CHIT_BIND_RR_consensus"/>
</dbReference>
<dbReference type="InterPro" id="IPR029070">
    <property type="entry name" value="Chitinase_insertion_sf"/>
</dbReference>
<dbReference type="InterPro" id="IPR050468">
    <property type="entry name" value="Cuticle_Struct_Prot"/>
</dbReference>
<dbReference type="InterPro" id="IPR000618">
    <property type="entry name" value="Insect_cuticle"/>
</dbReference>
<dbReference type="PANTHER" id="PTHR10380">
    <property type="entry name" value="CUTICLE PROTEIN"/>
    <property type="match status" value="1"/>
</dbReference>
<dbReference type="PANTHER" id="PTHR10380:SF173">
    <property type="entry name" value="CUTICULAR PROTEIN 47EF, ISOFORM C-RELATED"/>
    <property type="match status" value="1"/>
</dbReference>
<dbReference type="Pfam" id="PF00379">
    <property type="entry name" value="Chitin_bind_4"/>
    <property type="match status" value="1"/>
</dbReference>
<dbReference type="PRINTS" id="PR00947">
    <property type="entry name" value="CUTICLE"/>
</dbReference>
<dbReference type="PROSITE" id="PS00233">
    <property type="entry name" value="CHIT_BIND_RR_1"/>
    <property type="match status" value="1"/>
</dbReference>
<dbReference type="PROSITE" id="PS51155">
    <property type="entry name" value="CHIT_BIND_RR_2"/>
    <property type="match status" value="1"/>
</dbReference>
<feature type="chain" id="PRO_0000196126" description="Cuticle protein 10.9">
    <location>
        <begin position="1"/>
        <end position="102"/>
    </location>
</feature>
<feature type="domain" description="Chitin-binding type R&amp;R" evidence="1">
    <location>
        <begin position="8"/>
        <end position="74"/>
    </location>
</feature>
<feature type="region of interest" description="Disordered" evidence="2">
    <location>
        <begin position="1"/>
        <end position="45"/>
    </location>
</feature>
<feature type="compositionally biased region" description="Polar residues" evidence="2">
    <location>
        <begin position="36"/>
        <end position="45"/>
    </location>
</feature>
<feature type="modified residue" description="Pyrrolidone carboxylic acid" evidence="3">
    <location>
        <position position="1"/>
    </location>
</feature>
<evidence type="ECO:0000255" key="1">
    <source>
        <dbReference type="PROSITE-ProRule" id="PRU00497"/>
    </source>
</evidence>
<evidence type="ECO:0000256" key="2">
    <source>
        <dbReference type="SAM" id="MobiDB-lite"/>
    </source>
</evidence>
<evidence type="ECO:0000269" key="3">
    <source>
    </source>
</evidence>
<organism>
    <name type="scientific">Ixodes ricinus</name>
    <name type="common">Common tick</name>
    <name type="synonym">Acarus ricinus</name>
    <dbReference type="NCBI Taxonomy" id="34613"/>
    <lineage>
        <taxon>Eukaryota</taxon>
        <taxon>Metazoa</taxon>
        <taxon>Ecdysozoa</taxon>
        <taxon>Arthropoda</taxon>
        <taxon>Chelicerata</taxon>
        <taxon>Arachnida</taxon>
        <taxon>Acari</taxon>
        <taxon>Parasitiformes</taxon>
        <taxon>Ixodida</taxon>
        <taxon>Ixodoidea</taxon>
        <taxon>Ixodidae</taxon>
        <taxon>Ixodinae</taxon>
        <taxon>Ixodes</taxon>
    </lineage>
</organism>
<comment type="function">
    <text evidence="3">Component of the cuticle of the tick. Binds chitin.</text>
</comment>
<comment type="mass spectrometry"/>
<proteinExistence type="evidence at protein level"/>
<protein>
    <recommendedName>
        <fullName>Cuticle protein 10.9</fullName>
    </recommendedName>
    <alternativeName>
        <fullName>Ir-ACP10.9</fullName>
    </alternativeName>
</protein>
<reference key="1">
    <citation type="journal article" date="2005" name="Insect Biochem. Mol. Biol.">
        <title>The extensible alloscutal cuticle of the tick, Ixodes ricinus.</title>
        <authorList>
            <person name="Andersen S.O."/>
            <person name="Roepstorff P."/>
        </authorList>
    </citation>
    <scope>PROTEIN SEQUENCE</scope>
    <scope>FUNCTION</scope>
    <scope>MASS SPECTROMETRY</scope>
    <scope>PYROGLUTAMATE FORMATION AT GLN-1</scope>
    <source>
        <tissue>Cuticle</tissue>
    </source>
</reference>
<sequence>QLAEQYPPHPYSFSYDATDETGARISTSESGDESNSKTGSYSYQTPDGVYRTVNYVADATGFHASIDTNEPGTKSEAPADVTINANPIEVKEAYAFKAKSAA</sequence>
<accession>P84251</accession>
<keyword id="KW-0147">Chitin-binding</keyword>
<keyword id="KW-0193">Cuticle</keyword>
<keyword id="KW-0903">Direct protein sequencing</keyword>
<keyword id="KW-0873">Pyrrolidone carboxylic acid</keyword>